<protein>
    <recommendedName>
        <fullName>5-hydroxytryptamine receptor 7</fullName>
        <shortName>5-HT-7</shortName>
        <shortName>5-HT7</shortName>
    </recommendedName>
    <alternativeName>
        <fullName>Serotonin receptor 7</fullName>
    </alternativeName>
</protein>
<keyword id="KW-1003">Cell membrane</keyword>
<keyword id="KW-1015">Disulfide bond</keyword>
<keyword id="KW-0297">G-protein coupled receptor</keyword>
<keyword id="KW-0325">Glycoprotein</keyword>
<keyword id="KW-0449">Lipoprotein</keyword>
<keyword id="KW-0472">Membrane</keyword>
<keyword id="KW-0564">Palmitate</keyword>
<keyword id="KW-0675">Receptor</keyword>
<keyword id="KW-1185">Reference proteome</keyword>
<keyword id="KW-0807">Transducer</keyword>
<keyword id="KW-0812">Transmembrane</keyword>
<keyword id="KW-1133">Transmembrane helix</keyword>
<feature type="chain" id="PRO_0000068982" description="5-hydroxytryptamine receptor 7">
    <location>
        <begin position="1"/>
        <end position="425"/>
    </location>
</feature>
<feature type="topological domain" description="Extracellular" evidence="1">
    <location>
        <begin position="1"/>
        <end position="72"/>
    </location>
</feature>
<feature type="transmembrane region" description="Helical; Name=1" evidence="1">
    <location>
        <begin position="73"/>
        <end position="97"/>
    </location>
</feature>
<feature type="topological domain" description="Cytoplasmic" evidence="1">
    <location>
        <begin position="98"/>
        <end position="107"/>
    </location>
</feature>
<feature type="transmembrane region" description="Helical; Name=2" evidence="1">
    <location>
        <begin position="108"/>
        <end position="129"/>
    </location>
</feature>
<feature type="topological domain" description="Extracellular" evidence="1">
    <location>
        <begin position="130"/>
        <end position="141"/>
    </location>
</feature>
<feature type="transmembrane region" description="Helical; Name=3" evidence="1">
    <location>
        <begin position="142"/>
        <end position="167"/>
    </location>
</feature>
<feature type="topological domain" description="Cytoplasmic" evidence="1">
    <location>
        <begin position="168"/>
        <end position="187"/>
    </location>
</feature>
<feature type="transmembrane region" description="Helical; Name=4" evidence="1">
    <location>
        <begin position="188"/>
        <end position="208"/>
    </location>
</feature>
<feature type="topological domain" description="Extracellular" evidence="1">
    <location>
        <begin position="209"/>
        <end position="226"/>
    </location>
</feature>
<feature type="transmembrane region" description="Helical; Name=5" evidence="1">
    <location>
        <begin position="227"/>
        <end position="249"/>
    </location>
</feature>
<feature type="topological domain" description="Cytoplasmic" evidence="1">
    <location>
        <begin position="250"/>
        <end position="322"/>
    </location>
</feature>
<feature type="transmembrane region" description="Helical; Name=6" evidence="1">
    <location>
        <begin position="323"/>
        <end position="348"/>
    </location>
</feature>
<feature type="topological domain" description="Extracellular" evidence="1">
    <location>
        <begin position="349"/>
        <end position="359"/>
    </location>
</feature>
<feature type="transmembrane region" description="Helical; Name=7" evidence="1">
    <location>
        <begin position="360"/>
        <end position="383"/>
    </location>
</feature>
<feature type="topological domain" description="Cytoplasmic" evidence="1">
    <location>
        <begin position="384"/>
        <end position="425"/>
    </location>
</feature>
<feature type="binding site" evidence="2">
    <location>
        <position position="151"/>
    </location>
    <ligand>
        <name>serotonin</name>
        <dbReference type="ChEBI" id="CHEBI:350546"/>
    </ligand>
</feature>
<feature type="lipid moiety-binding region" description="S-palmitoyl cysteine" evidence="3">
    <location>
        <position position="397"/>
    </location>
</feature>
<feature type="glycosylation site" description="N-linked (GlcNAc...) asparagine" evidence="3">
    <location>
        <position position="14"/>
    </location>
</feature>
<feature type="glycosylation site" description="N-linked (GlcNAc...) asparagine" evidence="3">
    <location>
        <position position="41"/>
    </location>
</feature>
<feature type="glycosylation site" description="N-linked (GlcNAc...) asparagine" evidence="3">
    <location>
        <position position="51"/>
    </location>
</feature>
<feature type="disulfide bond" evidence="4">
    <location>
        <begin position="144"/>
        <end position="220"/>
    </location>
</feature>
<organism>
    <name type="scientific">Xenopus laevis</name>
    <name type="common">African clawed frog</name>
    <dbReference type="NCBI Taxonomy" id="8355"/>
    <lineage>
        <taxon>Eukaryota</taxon>
        <taxon>Metazoa</taxon>
        <taxon>Chordata</taxon>
        <taxon>Craniata</taxon>
        <taxon>Vertebrata</taxon>
        <taxon>Euteleostomi</taxon>
        <taxon>Amphibia</taxon>
        <taxon>Batrachia</taxon>
        <taxon>Anura</taxon>
        <taxon>Pipoidea</taxon>
        <taxon>Pipidae</taxon>
        <taxon>Xenopodinae</taxon>
        <taxon>Xenopus</taxon>
        <taxon>Xenopus</taxon>
    </lineage>
</organism>
<name>5HT7R_XENLA</name>
<accession>Q91559</accession>
<evidence type="ECO:0000250" key="1">
    <source>
        <dbReference type="UniProtKB" id="P34969"/>
    </source>
</evidence>
<evidence type="ECO:0000250" key="2">
    <source>
        <dbReference type="UniProtKB" id="Q13639"/>
    </source>
</evidence>
<evidence type="ECO:0000255" key="3"/>
<evidence type="ECO:0000255" key="4">
    <source>
        <dbReference type="PROSITE-ProRule" id="PRU00521"/>
    </source>
</evidence>
<dbReference type="EMBL" id="U10161">
    <property type="protein sequence ID" value="AAA96812.1"/>
    <property type="molecule type" value="mRNA"/>
</dbReference>
<dbReference type="RefSeq" id="NP_001079253.1">
    <property type="nucleotide sequence ID" value="NM_001085784.1"/>
</dbReference>
<dbReference type="SMR" id="Q91559"/>
<dbReference type="GlyCosmos" id="Q91559">
    <property type="glycosylation" value="3 sites, No reported glycans"/>
</dbReference>
<dbReference type="GeneID" id="378527"/>
<dbReference type="KEGG" id="xla:378527"/>
<dbReference type="AGR" id="Xenbase:XB-GENE-5959536"/>
<dbReference type="CTD" id="378527"/>
<dbReference type="Xenbase" id="XB-GENE-5959536">
    <property type="gene designation" value="htr7l.S"/>
</dbReference>
<dbReference type="OrthoDB" id="10063595at2759"/>
<dbReference type="Proteomes" id="UP000186698">
    <property type="component" value="Chromosome 1S"/>
</dbReference>
<dbReference type="Bgee" id="378527">
    <property type="expression patterns" value="Expressed in camera-type eye and 3 other cell types or tissues"/>
</dbReference>
<dbReference type="GO" id="GO:0005886">
    <property type="term" value="C:plasma membrane"/>
    <property type="evidence" value="ECO:0000250"/>
    <property type="project" value="UniProtKB"/>
</dbReference>
<dbReference type="GO" id="GO:0045202">
    <property type="term" value="C:synapse"/>
    <property type="evidence" value="ECO:0007669"/>
    <property type="project" value="GOC"/>
</dbReference>
<dbReference type="GO" id="GO:0004993">
    <property type="term" value="F:G protein-coupled serotonin receptor activity"/>
    <property type="evidence" value="ECO:0000250"/>
    <property type="project" value="UniProtKB"/>
</dbReference>
<dbReference type="GO" id="GO:0071880">
    <property type="term" value="P:adenylate cyclase-activating adrenergic receptor signaling pathway"/>
    <property type="evidence" value="ECO:0007669"/>
    <property type="project" value="TreeGrafter"/>
</dbReference>
<dbReference type="GO" id="GO:0007192">
    <property type="term" value="P:adenylate cyclase-activating serotonin receptor signaling pathway"/>
    <property type="evidence" value="ECO:0000250"/>
    <property type="project" value="UniProtKB"/>
</dbReference>
<dbReference type="GO" id="GO:0007268">
    <property type="term" value="P:chemical synaptic transmission"/>
    <property type="evidence" value="ECO:0007669"/>
    <property type="project" value="InterPro"/>
</dbReference>
<dbReference type="GO" id="GO:0007623">
    <property type="term" value="P:circadian rhythm"/>
    <property type="evidence" value="ECO:0007669"/>
    <property type="project" value="InterPro"/>
</dbReference>
<dbReference type="GO" id="GO:0043410">
    <property type="term" value="P:positive regulation of MAPK cascade"/>
    <property type="evidence" value="ECO:0007669"/>
    <property type="project" value="TreeGrafter"/>
</dbReference>
<dbReference type="GO" id="GO:0006939">
    <property type="term" value="P:smooth muscle contraction"/>
    <property type="evidence" value="ECO:0007669"/>
    <property type="project" value="InterPro"/>
</dbReference>
<dbReference type="GO" id="GO:0042310">
    <property type="term" value="P:vasoconstriction"/>
    <property type="evidence" value="ECO:0007669"/>
    <property type="project" value="InterPro"/>
</dbReference>
<dbReference type="CDD" id="cd15329">
    <property type="entry name" value="7tmA_5-HT7"/>
    <property type="match status" value="1"/>
</dbReference>
<dbReference type="FunFam" id="1.20.1070.10:FF:000071">
    <property type="entry name" value="5-hydroxytryptamine (serotonin) receptor 7a"/>
    <property type="match status" value="1"/>
</dbReference>
<dbReference type="Gene3D" id="1.20.1070.10">
    <property type="entry name" value="Rhodopsin 7-helix transmembrane proteins"/>
    <property type="match status" value="1"/>
</dbReference>
<dbReference type="InterPro" id="IPR001069">
    <property type="entry name" value="5HT_7_rcpt"/>
</dbReference>
<dbReference type="InterPro" id="IPR002231">
    <property type="entry name" value="5HT_rcpt"/>
</dbReference>
<dbReference type="InterPro" id="IPR000276">
    <property type="entry name" value="GPCR_Rhodpsn"/>
</dbReference>
<dbReference type="InterPro" id="IPR017452">
    <property type="entry name" value="GPCR_Rhodpsn_7TM"/>
</dbReference>
<dbReference type="PANTHER" id="PTHR24248">
    <property type="entry name" value="ADRENERGIC RECEPTOR-RELATED G-PROTEIN COUPLED RECEPTOR"/>
    <property type="match status" value="1"/>
</dbReference>
<dbReference type="PANTHER" id="PTHR24248:SF199">
    <property type="entry name" value="IP13425P-RELATED"/>
    <property type="match status" value="1"/>
</dbReference>
<dbReference type="Pfam" id="PF00001">
    <property type="entry name" value="7tm_1"/>
    <property type="match status" value="1"/>
</dbReference>
<dbReference type="PRINTS" id="PR00652">
    <property type="entry name" value="5HT7RECEPTR"/>
</dbReference>
<dbReference type="PRINTS" id="PR01101">
    <property type="entry name" value="5HTRECEPTOR"/>
</dbReference>
<dbReference type="PRINTS" id="PR00237">
    <property type="entry name" value="GPCRRHODOPSN"/>
</dbReference>
<dbReference type="SMART" id="SM01381">
    <property type="entry name" value="7TM_GPCR_Srsx"/>
    <property type="match status" value="1"/>
</dbReference>
<dbReference type="SUPFAM" id="SSF81321">
    <property type="entry name" value="Family A G protein-coupled receptor-like"/>
    <property type="match status" value="1"/>
</dbReference>
<dbReference type="PROSITE" id="PS00237">
    <property type="entry name" value="G_PROTEIN_RECEP_F1_1"/>
    <property type="match status" value="1"/>
</dbReference>
<dbReference type="PROSITE" id="PS50262">
    <property type="entry name" value="G_PROTEIN_RECEP_F1_2"/>
    <property type="match status" value="1"/>
</dbReference>
<reference key="1">
    <citation type="journal article" date="1995" name="Recept. Channels">
        <title>Cloning and expression of a 5HT7 receptor from Xenopus laevis.</title>
        <authorList>
            <person name="Nelson C.S."/>
            <person name="Cone R.D."/>
            <person name="Robbins L.S."/>
            <person name="Allen C.N."/>
            <person name="Adelman J.P."/>
        </authorList>
    </citation>
    <scope>NUCLEOTIDE SEQUENCE [MRNA]</scope>
    <source>
        <tissue>Skin</tissue>
    </source>
</reference>
<sequence length="425" mass="48017">MLIQVQPSHLTDTNLSLHSAKPSSDHQNLLPSEFMTERPLNTTEQDLTALNHTEKPDCGKELLLYGDTEKIVIGVVLSIITLFTIAGNALVIISVCIVKKLRQPSNYLVVSLAAADLSVAVAVMPFVIITDLVGGEWLFGKVFCNVFIAMDVMCCTASIMTLCVISVDRYLGITRPLTYPARQNGKLMAKMVFIVWLLSASITLPPLFGWAKNVNVERVCLISQDFGYTVYSTAVAFYIPMTVMLVMYQRIFVAAKISAEKHKFVNIPRLYEQEGIYCLEDKLPPKKNSKKKKAVEEFASLSKLIRQDRKNISIFKREQKAARTLGIIVGAFTFCWLPFFLLSTARPFICGIMCSCMPLRLERTLLWLGYTNSLINPLIYAFFNRDLRTTFWNLLRCKYTNINRRLSAASMHEALKVTERHEGIL</sequence>
<comment type="function">
    <text evidence="1">G-protein coupled receptor for 5-hydroxytryptamine (serotonin), a biogenic hormone that functions as a neurotransmitter, a hormone and a mitogen. Ligand binding causes a conformation change that triggers signaling via guanine nucleotide-binding proteins (G proteins) and modulates the activity of downstream effectors. HTR7 is coupled to G(s) G alpha proteins and mediates activation of adenylate cyclase activity.</text>
</comment>
<comment type="subcellular location">
    <subcellularLocation>
        <location evidence="1">Cell membrane</location>
        <topology evidence="1">Multi-pass membrane protein</topology>
    </subcellularLocation>
</comment>
<comment type="domain">
    <text evidence="2">Specificity for G(s) G alpha proteins is determined by the length of transmembrane regions 5 and 6 (TM5 and TM6).</text>
</comment>
<comment type="similarity">
    <text evidence="4">Belongs to the G-protein coupled receptor 1 family.</text>
</comment>
<gene>
    <name type="primary">htr7</name>
    <name type="synonym">5ht7</name>
</gene>
<proteinExistence type="evidence at transcript level"/>